<reference key="1">
    <citation type="journal article" date="2009" name="BMC Genomics">
        <title>Pseudogene accumulation in the evolutionary histories of Salmonella enterica serovars Paratyphi A and Typhi.</title>
        <authorList>
            <person name="Holt K.E."/>
            <person name="Thomson N.R."/>
            <person name="Wain J."/>
            <person name="Langridge G.C."/>
            <person name="Hasan R."/>
            <person name="Bhutta Z.A."/>
            <person name="Quail M.A."/>
            <person name="Norbertczak H."/>
            <person name="Walker D."/>
            <person name="Simmonds M."/>
            <person name="White B."/>
            <person name="Bason N."/>
            <person name="Mungall K."/>
            <person name="Dougan G."/>
            <person name="Parkhill J."/>
        </authorList>
    </citation>
    <scope>NUCLEOTIDE SEQUENCE [LARGE SCALE GENOMIC DNA]</scope>
    <source>
        <strain>AKU_12601</strain>
    </source>
</reference>
<proteinExistence type="inferred from homology"/>
<evidence type="ECO:0000255" key="1">
    <source>
        <dbReference type="HAMAP-Rule" id="MF_00171"/>
    </source>
</evidence>
<organism>
    <name type="scientific">Salmonella paratyphi A (strain AKU_12601)</name>
    <dbReference type="NCBI Taxonomy" id="554290"/>
    <lineage>
        <taxon>Bacteria</taxon>
        <taxon>Pseudomonadati</taxon>
        <taxon>Pseudomonadota</taxon>
        <taxon>Gammaproteobacteria</taxon>
        <taxon>Enterobacterales</taxon>
        <taxon>Enterobacteriaceae</taxon>
        <taxon>Salmonella</taxon>
    </lineage>
</organism>
<feature type="chain" id="PRO_1000097783" description="tRNA pseudouridine synthase A">
    <location>
        <begin position="1"/>
        <end position="270"/>
    </location>
</feature>
<feature type="active site" description="Nucleophile" evidence="1">
    <location>
        <position position="60"/>
    </location>
</feature>
<feature type="binding site" evidence="1">
    <location>
        <position position="118"/>
    </location>
    <ligand>
        <name>substrate</name>
    </ligand>
</feature>
<keyword id="KW-0413">Isomerase</keyword>
<keyword id="KW-0819">tRNA processing</keyword>
<accession>B5BCH8</accession>
<name>TRUA_SALPK</name>
<comment type="function">
    <text evidence="1">Formation of pseudouridine at positions 38, 39 and 40 in the anticodon stem and loop of transfer RNAs.</text>
</comment>
<comment type="catalytic activity">
    <reaction evidence="1">
        <text>uridine(38/39/40) in tRNA = pseudouridine(38/39/40) in tRNA</text>
        <dbReference type="Rhea" id="RHEA:22376"/>
        <dbReference type="Rhea" id="RHEA-COMP:10085"/>
        <dbReference type="Rhea" id="RHEA-COMP:10087"/>
        <dbReference type="ChEBI" id="CHEBI:65314"/>
        <dbReference type="ChEBI" id="CHEBI:65315"/>
        <dbReference type="EC" id="5.4.99.12"/>
    </reaction>
</comment>
<comment type="subunit">
    <text evidence="1">Homodimer.</text>
</comment>
<comment type="similarity">
    <text evidence="1">Belongs to the tRNA pseudouridine synthase TruA family.</text>
</comment>
<dbReference type="EC" id="5.4.99.12" evidence="1"/>
<dbReference type="EMBL" id="FM200053">
    <property type="protein sequence ID" value="CAR58589.1"/>
    <property type="molecule type" value="Genomic_DNA"/>
</dbReference>
<dbReference type="RefSeq" id="WP_000016631.1">
    <property type="nucleotide sequence ID" value="NC_011147.1"/>
</dbReference>
<dbReference type="SMR" id="B5BCH8"/>
<dbReference type="KEGG" id="sek:SSPA0460"/>
<dbReference type="HOGENOM" id="CLU_014673_0_2_6"/>
<dbReference type="Proteomes" id="UP000001869">
    <property type="component" value="Chromosome"/>
</dbReference>
<dbReference type="GO" id="GO:0003723">
    <property type="term" value="F:RNA binding"/>
    <property type="evidence" value="ECO:0007669"/>
    <property type="project" value="InterPro"/>
</dbReference>
<dbReference type="GO" id="GO:0160147">
    <property type="term" value="F:tRNA pseudouridine(38-40) synthase activity"/>
    <property type="evidence" value="ECO:0007669"/>
    <property type="project" value="UniProtKB-EC"/>
</dbReference>
<dbReference type="GO" id="GO:0031119">
    <property type="term" value="P:tRNA pseudouridine synthesis"/>
    <property type="evidence" value="ECO:0007669"/>
    <property type="project" value="UniProtKB-UniRule"/>
</dbReference>
<dbReference type="CDD" id="cd02570">
    <property type="entry name" value="PseudoU_synth_EcTruA"/>
    <property type="match status" value="1"/>
</dbReference>
<dbReference type="FunFam" id="3.30.70.580:FF:000001">
    <property type="entry name" value="tRNA pseudouridine synthase A"/>
    <property type="match status" value="1"/>
</dbReference>
<dbReference type="FunFam" id="3.30.70.660:FF:000001">
    <property type="entry name" value="tRNA pseudouridine synthase A"/>
    <property type="match status" value="1"/>
</dbReference>
<dbReference type="Gene3D" id="3.30.70.660">
    <property type="entry name" value="Pseudouridine synthase I, catalytic domain, C-terminal subdomain"/>
    <property type="match status" value="1"/>
</dbReference>
<dbReference type="Gene3D" id="3.30.70.580">
    <property type="entry name" value="Pseudouridine synthase I, catalytic domain, N-terminal subdomain"/>
    <property type="match status" value="1"/>
</dbReference>
<dbReference type="HAMAP" id="MF_00171">
    <property type="entry name" value="TruA"/>
    <property type="match status" value="1"/>
</dbReference>
<dbReference type="InterPro" id="IPR020103">
    <property type="entry name" value="PsdUridine_synth_cat_dom_sf"/>
</dbReference>
<dbReference type="InterPro" id="IPR001406">
    <property type="entry name" value="PsdUridine_synth_TruA"/>
</dbReference>
<dbReference type="InterPro" id="IPR020097">
    <property type="entry name" value="PsdUridine_synth_TruA_a/b_dom"/>
</dbReference>
<dbReference type="InterPro" id="IPR020095">
    <property type="entry name" value="PsdUridine_synth_TruA_C"/>
</dbReference>
<dbReference type="InterPro" id="IPR020094">
    <property type="entry name" value="TruA/RsuA/RluB/E/F_N"/>
</dbReference>
<dbReference type="NCBIfam" id="TIGR00071">
    <property type="entry name" value="hisT_truA"/>
    <property type="match status" value="1"/>
</dbReference>
<dbReference type="PANTHER" id="PTHR11142">
    <property type="entry name" value="PSEUDOURIDYLATE SYNTHASE"/>
    <property type="match status" value="1"/>
</dbReference>
<dbReference type="PANTHER" id="PTHR11142:SF0">
    <property type="entry name" value="TRNA PSEUDOURIDINE SYNTHASE-LIKE 1"/>
    <property type="match status" value="1"/>
</dbReference>
<dbReference type="Pfam" id="PF01416">
    <property type="entry name" value="PseudoU_synth_1"/>
    <property type="match status" value="2"/>
</dbReference>
<dbReference type="PIRSF" id="PIRSF001430">
    <property type="entry name" value="tRNA_psdUrid_synth"/>
    <property type="match status" value="1"/>
</dbReference>
<dbReference type="SUPFAM" id="SSF55120">
    <property type="entry name" value="Pseudouridine synthase"/>
    <property type="match status" value="1"/>
</dbReference>
<sequence length="270" mass="30297">MSGQQSSPVYKIALGIEYDGSKYYGWQRQNEVRSVQEKLEKALSQVANEPINVFCAGRTDAGVHGTGQVVHFETTALRKDAAWTLGVNANLPGDIAVRWVKTVPDDFHARFSATARRYRYIIYNHRLRPAVLAKGVTHYYEPLDAERMHRAAQCLLGENDFTSFRAVQCQSRTPWRNVMHINVTRHGPYVVVDIKANAFVHHMVRNIVGSLLEVGAHNQPESWIAELLAARDRTLAAATAKAEGLYLVAVDYPDRFDLPKPPMGPLFLAD</sequence>
<protein>
    <recommendedName>
        <fullName evidence="1">tRNA pseudouridine synthase A</fullName>
        <ecNumber evidence="1">5.4.99.12</ecNumber>
    </recommendedName>
    <alternativeName>
        <fullName evidence="1">tRNA pseudouridine(38-40) synthase</fullName>
    </alternativeName>
    <alternativeName>
        <fullName evidence="1">tRNA pseudouridylate synthase I</fullName>
    </alternativeName>
    <alternativeName>
        <fullName evidence="1">tRNA-uridine isomerase I</fullName>
    </alternativeName>
</protein>
<gene>
    <name evidence="1" type="primary">truA</name>
    <name type="ordered locus">SSPA0460</name>
</gene>